<gene>
    <name evidence="4" type="primary">chlF</name>
    <name evidence="4" type="synonym">psbA4</name>
    <name type="ORF">S7335_4253</name>
</gene>
<sequence>MIQTGFGRTSALEGFEQPFDPAQAIDLESPLTSTDTSVENTTRNAGALWPSSQPLSPWERFCRWVTSTENRIYIGWFGMLAIPTLATAAIVFVLAIIAAPAVDMDGTGRMVSGSLLDGNNLITAAVVPTSAAIGLHFYPIWEAASLDEWLINGGPYQLIVLHFIIGIISYQDREWELSYRLKMRPWISLAFTAPVAASVSVLLVYPVGQGGFASGMPLGISGTFTFMMQFQADHNILASPLHQMGVIGVLGGALLCAVHGSLVTSTVCRAPAQTMALTTTKTGTDRQKPKKAKTYSFEHAQAYQQTLLWRGAKFNSSRAVHFCLAALPVAGIWSAAIGVDLAAFDFDRLSFELPSHISVRKTVVPTWSDVVNQANLGIHTVGEKTPPKFSESGFPEFKLSEFVEPIAEDSASTLLSPHS</sequence>
<reference key="1">
    <citation type="submission" date="2008-07" db="EMBL/GenBank/DDBJ databases">
        <authorList>
            <person name="Tandeau de Marsac N."/>
            <person name="Ferriera S."/>
            <person name="Johnson J."/>
            <person name="Kravitz S."/>
            <person name="Beeson K."/>
            <person name="Sutton G."/>
            <person name="Rogers Y.-H."/>
            <person name="Friedman R."/>
            <person name="Frazier M."/>
            <person name="Venter J.C."/>
        </authorList>
    </citation>
    <scope>NUCLEOTIDE SEQUENCE [LARGE SCALE GENOMIC DNA]</scope>
    <source>
        <strain>ATCC 29403 / PCC 7335</strain>
    </source>
</reference>
<reference key="2">
    <citation type="journal article" date="2012" name="Photosyn. Res.">
        <title>Sequence variation at the oxygen-evolving centre of photosystem II: a new class of 'rogue' cyanobacterial D1 proteins.</title>
        <authorList>
            <person name="Murray J.W."/>
        </authorList>
    </citation>
    <scope>DISCUSSION OF SEQUENCE</scope>
</reference>
<reference key="3">
    <citation type="journal article" date="2016" name="Science">
        <title>Light-dependent chlorophyll f synthase is a highly divergent paralog of PsbA of photosystem II.</title>
        <authorList>
            <person name="Ho M.Y."/>
            <person name="Shen G."/>
            <person name="Canniffe D.P."/>
            <person name="Zhao C."/>
            <person name="Bryant D.A."/>
        </authorList>
    </citation>
    <scope>FUNCTION</scope>
    <scope>SUBUNIT</scope>
    <scope>DISRUPTION PHENOTYPE</scope>
    <source>
        <strain>ATCC 29403 / PCC 7335</strain>
    </source>
</reference>
<dbReference type="EMBL" id="DS989904">
    <property type="protein sequence ID" value="EDX86548.1"/>
    <property type="molecule type" value="Genomic_DNA"/>
</dbReference>
<dbReference type="RefSeq" id="WP_006456314.1">
    <property type="nucleotide sequence ID" value="NZ_DS989904.1"/>
</dbReference>
<dbReference type="SMR" id="B4WP19"/>
<dbReference type="STRING" id="91464.S7335_4253"/>
<dbReference type="eggNOG" id="ENOG502Z87P">
    <property type="taxonomic scope" value="Bacteria"/>
</dbReference>
<dbReference type="HOGENOM" id="CLU_054206_1_0_3"/>
<dbReference type="OrthoDB" id="505356at2"/>
<dbReference type="Proteomes" id="UP000005766">
    <property type="component" value="Unassembled WGS sequence"/>
</dbReference>
<dbReference type="GO" id="GO:0009523">
    <property type="term" value="C:photosystem II"/>
    <property type="evidence" value="ECO:0007669"/>
    <property type="project" value="TreeGrafter"/>
</dbReference>
<dbReference type="GO" id="GO:0031676">
    <property type="term" value="C:plasma membrane-derived thylakoid membrane"/>
    <property type="evidence" value="ECO:0007669"/>
    <property type="project" value="UniProtKB-SubCell"/>
</dbReference>
<dbReference type="GO" id="GO:0016168">
    <property type="term" value="F:chlorophyll binding"/>
    <property type="evidence" value="ECO:0007669"/>
    <property type="project" value="UniProtKB-KW"/>
</dbReference>
<dbReference type="GO" id="GO:0045156">
    <property type="term" value="F:electron transporter, transferring electrons within the cyclic electron transport pathway of photosynthesis activity"/>
    <property type="evidence" value="ECO:0007669"/>
    <property type="project" value="InterPro"/>
</dbReference>
<dbReference type="GO" id="GO:0046872">
    <property type="term" value="F:metal ion binding"/>
    <property type="evidence" value="ECO:0007669"/>
    <property type="project" value="UniProtKB-KW"/>
</dbReference>
<dbReference type="GO" id="GO:0016491">
    <property type="term" value="F:oxidoreductase activity"/>
    <property type="evidence" value="ECO:0007669"/>
    <property type="project" value="UniProtKB-KW"/>
</dbReference>
<dbReference type="GO" id="GO:0036067">
    <property type="term" value="P:light-dependent chlorophyll biosynthetic process"/>
    <property type="evidence" value="ECO:0000315"/>
    <property type="project" value="UniProtKB"/>
</dbReference>
<dbReference type="GO" id="GO:0009772">
    <property type="term" value="P:photosynthetic electron transport in photosystem II"/>
    <property type="evidence" value="ECO:0007669"/>
    <property type="project" value="InterPro"/>
</dbReference>
<dbReference type="FunFam" id="1.20.85.10:FF:000002">
    <property type="entry name" value="Photosystem II protein D1"/>
    <property type="match status" value="1"/>
</dbReference>
<dbReference type="Gene3D" id="1.20.85.10">
    <property type="entry name" value="Photosystem II protein D1-like"/>
    <property type="match status" value="1"/>
</dbReference>
<dbReference type="InterPro" id="IPR055266">
    <property type="entry name" value="D1/D2"/>
</dbReference>
<dbReference type="InterPro" id="IPR036854">
    <property type="entry name" value="Photo_II_D1/D2_sf"/>
</dbReference>
<dbReference type="InterPro" id="IPR000484">
    <property type="entry name" value="Photo_RC_L/M"/>
</dbReference>
<dbReference type="InterPro" id="IPR055265">
    <property type="entry name" value="Photo_RC_L/M_CS"/>
</dbReference>
<dbReference type="PANTHER" id="PTHR33149:SF12">
    <property type="entry name" value="PHOTOSYSTEM II D2 PROTEIN"/>
    <property type="match status" value="1"/>
</dbReference>
<dbReference type="PANTHER" id="PTHR33149">
    <property type="entry name" value="PHOTOSYSTEM II PROTEIN D1"/>
    <property type="match status" value="1"/>
</dbReference>
<dbReference type="Pfam" id="PF00124">
    <property type="entry name" value="Photo_RC"/>
    <property type="match status" value="1"/>
</dbReference>
<dbReference type="PRINTS" id="PR00256">
    <property type="entry name" value="REACTNCENTRE"/>
</dbReference>
<dbReference type="SUPFAM" id="SSF81483">
    <property type="entry name" value="Bacterial photosystem II reaction centre, L and M subunits"/>
    <property type="match status" value="1"/>
</dbReference>
<dbReference type="PROSITE" id="PS00244">
    <property type="entry name" value="REACTION_CENTER"/>
    <property type="match status" value="1"/>
</dbReference>
<keyword id="KW-0148">Chlorophyll</keyword>
<keyword id="KW-0149">Chlorophyll biosynthesis</keyword>
<keyword id="KW-0157">Chromophore</keyword>
<keyword id="KW-0460">Magnesium</keyword>
<keyword id="KW-0472">Membrane</keyword>
<keyword id="KW-0479">Metal-binding</keyword>
<keyword id="KW-0560">Oxidoreductase</keyword>
<keyword id="KW-0602">Photosynthesis</keyword>
<keyword id="KW-1185">Reference proteome</keyword>
<keyword id="KW-0793">Thylakoid</keyword>
<keyword id="KW-0812">Transmembrane</keyword>
<keyword id="KW-1133">Transmembrane helix</keyword>
<proteinExistence type="evidence at protein level"/>
<feature type="chain" id="PRO_0000437941" description="Light-dependent chlorophyll f synthase">
    <location>
        <begin position="1"/>
        <end position="419"/>
    </location>
</feature>
<feature type="transmembrane region" description="Helical" evidence="1">
    <location>
        <begin position="73"/>
        <end position="90"/>
    </location>
</feature>
<feature type="transmembrane region" description="Helical" evidence="1">
    <location>
        <begin position="162"/>
        <end position="177"/>
    </location>
</feature>
<feature type="transmembrane region" description="Helical" evidence="1">
    <location>
        <begin position="186"/>
        <end position="200"/>
    </location>
</feature>
<feature type="transmembrane region" description="Helical" evidence="1">
    <location>
        <begin position="241"/>
        <end position="262"/>
    </location>
</feature>
<feature type="transmembrane region" description="Helical" evidence="1">
    <location>
        <begin position="323"/>
        <end position="337"/>
    </location>
</feature>
<feature type="binding site" description="axial binding residue" evidence="1">
    <location>
        <position position="162"/>
    </location>
    <ligand>
        <name>a chlorophyll</name>
        <dbReference type="ChEBI" id="CHEBI:139291"/>
    </ligand>
    <ligandPart>
        <name>Mg</name>
        <dbReference type="ChEBI" id="CHEBI:25107"/>
    </ligandPart>
</feature>
<feature type="binding site" description="axial binding residue" evidence="1">
    <location>
        <position position="242"/>
    </location>
    <ligand>
        <name>a chlorophyll</name>
        <dbReference type="ChEBI" id="CHEBI:139291"/>
    </ligand>
    <ligandPart>
        <name>Mg</name>
        <dbReference type="ChEBI" id="CHEBI:25107"/>
    </ligandPart>
</feature>
<feature type="site" description="Tyrosine radical intermediate" evidence="1">
    <location>
        <position position="205"/>
    </location>
</feature>
<feature type="site" description="Stabilizes free radical intermediate" evidence="1">
    <location>
        <position position="234"/>
    </location>
</feature>
<protein>
    <recommendedName>
        <fullName evidence="4">Light-dependent chlorophyll f synthase</fullName>
        <shortName evidence="4">Chl f synthase</shortName>
    </recommendedName>
    <alternativeName>
        <fullName evidence="3">Super-rogue D1</fullName>
    </alternativeName>
    <alternativeName>
        <fullName evidence="4">Super-rogue PsbA4</fullName>
        <shortName evidence="4">Sr-PsbA4</shortName>
    </alternativeName>
</protein>
<name>CHLF_SYNS7</name>
<organism>
    <name type="scientific">Synechococcus sp. (strain ATCC 29403 / PCC 7335)</name>
    <dbReference type="NCBI Taxonomy" id="91464"/>
    <lineage>
        <taxon>Bacteria</taxon>
        <taxon>Bacillati</taxon>
        <taxon>Cyanobacteriota</taxon>
        <taxon>Cyanophyceae</taxon>
        <taxon>Synechococcales</taxon>
        <taxon>Synechococcaceae</taxon>
        <taxon>Synechococcus</taxon>
    </lineage>
</organism>
<comment type="function">
    <text evidence="2">Synthesizes chlorophyll f or chlorophyllide f (Chl f, 2-formyl chlorophyll a), probably by oxidation of chlorophyll a or chlorophyllide a and reduction of plastoquinone. The reaction is probably light-dependent. Chl f absorbs far red light (FRL, 707 nm in 100% methanol), and is synthesized when cells are grown in FRL, where it provides the advantage of extending the spectral range of harvested light in terrestrial cyanobacteria (PubMed:27386923). Chl f synthesis is probably light-dependent (PubMed:27386923).</text>
</comment>
<comment type="subunit">
    <text evidence="6">Homodimer (PubMed:27386923).</text>
</comment>
<comment type="subcellular location">
    <subcellularLocation>
        <location evidence="5">Cellular thylakoid membrane</location>
        <topology evidence="1">Multi-pass membrane protein</topology>
    </subcellularLocation>
</comment>
<comment type="disruption phenotype">
    <text evidence="2">No synthesis of chlorophyll f when grown in FRL (705-735 nm, 26-30 umol photons/m(2)/s) (PubMed:27386923).</text>
</comment>
<comment type="miscellaneous">
    <text evidence="3">Due to differences in the C-terminus this protein cannot bind the oxygen-evolving Mn4-Ca-O5 cluster bound by 'normal' PsbA, however it probably still binds plastoquinone and chlorophyll (PubMed:22187288).</text>
</comment>
<comment type="similarity">
    <text>Belongs to the reaction center PufL/M/PsbA/D family.</text>
</comment>
<accession>B4WP19</accession>
<evidence type="ECO:0000250" key="1">
    <source>
        <dbReference type="UniProtKB" id="P51765"/>
    </source>
</evidence>
<evidence type="ECO:0000269" key="2">
    <source>
    </source>
</evidence>
<evidence type="ECO:0000303" key="3">
    <source>
    </source>
</evidence>
<evidence type="ECO:0000303" key="4">
    <source>
    </source>
</evidence>
<evidence type="ECO:0000305" key="5"/>
<evidence type="ECO:0000305" key="6">
    <source>
    </source>
</evidence>